<gene>
    <name evidence="1" type="primary">scpB</name>
    <name type="ordered locus">SpyM51549</name>
</gene>
<evidence type="ECO:0000255" key="1">
    <source>
        <dbReference type="HAMAP-Rule" id="MF_01804"/>
    </source>
</evidence>
<comment type="function">
    <text evidence="1">Participates in chromosomal partition during cell division. May act via the formation of a condensin-like complex containing Smc and ScpA that pull DNA away from mid-cell into both cell halves.</text>
</comment>
<comment type="subunit">
    <text evidence="1">Homodimer. Homodimerization may be required to stabilize the binding of ScpA to the Smc head domains. Component of a cohesin-like complex composed of ScpA, ScpB and the Smc homodimer, in which ScpA and ScpB bind to the head domain of Smc. The presence of the three proteins is required for the association of the complex with DNA.</text>
</comment>
<comment type="subcellular location">
    <subcellularLocation>
        <location evidence="1">Cytoplasm</location>
    </subcellularLocation>
    <text evidence="1">Associated with two foci at the outer edges of the nucleoid region in young cells, and at four foci within both cell halves in older cells.</text>
</comment>
<comment type="similarity">
    <text evidence="1">Belongs to the ScpB family.</text>
</comment>
<accession>A2RG91</accession>
<keyword id="KW-0131">Cell cycle</keyword>
<keyword id="KW-0132">Cell division</keyword>
<keyword id="KW-0159">Chromosome partition</keyword>
<keyword id="KW-0963">Cytoplasm</keyword>
<proteinExistence type="inferred from homology"/>
<reference key="1">
    <citation type="journal article" date="2007" name="J. Bacteriol.">
        <title>Complete genome of acute rheumatic fever-associated serotype M5 Streptococcus pyogenes strain Manfredo.</title>
        <authorList>
            <person name="Holden M.T.G."/>
            <person name="Scott A."/>
            <person name="Cherevach I."/>
            <person name="Chillingworth T."/>
            <person name="Churcher C."/>
            <person name="Cronin A."/>
            <person name="Dowd L."/>
            <person name="Feltwell T."/>
            <person name="Hamlin N."/>
            <person name="Holroyd S."/>
            <person name="Jagels K."/>
            <person name="Moule S."/>
            <person name="Mungall K."/>
            <person name="Quail M.A."/>
            <person name="Price C."/>
            <person name="Rabbinowitsch E."/>
            <person name="Sharp S."/>
            <person name="Skelton J."/>
            <person name="Whitehead S."/>
            <person name="Barrell B.G."/>
            <person name="Kehoe M."/>
            <person name="Parkhill J."/>
        </authorList>
    </citation>
    <scope>NUCLEOTIDE SEQUENCE [LARGE SCALE GENOMIC DNA]</scope>
    <source>
        <strain>Manfredo</strain>
    </source>
</reference>
<dbReference type="EMBL" id="AM295007">
    <property type="protein sequence ID" value="CAM30870.1"/>
    <property type="molecule type" value="Genomic_DNA"/>
</dbReference>
<dbReference type="RefSeq" id="WP_002985894.1">
    <property type="nucleotide sequence ID" value="NC_009332.1"/>
</dbReference>
<dbReference type="SMR" id="A2RG91"/>
<dbReference type="GeneID" id="69901359"/>
<dbReference type="KEGG" id="spf:SpyM51549"/>
<dbReference type="HOGENOM" id="CLU_045647_5_3_9"/>
<dbReference type="GO" id="GO:0005737">
    <property type="term" value="C:cytoplasm"/>
    <property type="evidence" value="ECO:0007669"/>
    <property type="project" value="UniProtKB-SubCell"/>
</dbReference>
<dbReference type="GO" id="GO:0051301">
    <property type="term" value="P:cell division"/>
    <property type="evidence" value="ECO:0007669"/>
    <property type="project" value="UniProtKB-KW"/>
</dbReference>
<dbReference type="GO" id="GO:0051304">
    <property type="term" value="P:chromosome separation"/>
    <property type="evidence" value="ECO:0007669"/>
    <property type="project" value="InterPro"/>
</dbReference>
<dbReference type="GO" id="GO:0006260">
    <property type="term" value="P:DNA replication"/>
    <property type="evidence" value="ECO:0007669"/>
    <property type="project" value="UniProtKB-UniRule"/>
</dbReference>
<dbReference type="Gene3D" id="1.10.10.10">
    <property type="entry name" value="Winged helix-like DNA-binding domain superfamily/Winged helix DNA-binding domain"/>
    <property type="match status" value="2"/>
</dbReference>
<dbReference type="HAMAP" id="MF_01804">
    <property type="entry name" value="ScpB"/>
    <property type="match status" value="1"/>
</dbReference>
<dbReference type="InterPro" id="IPR005234">
    <property type="entry name" value="ScpB_csome_segregation"/>
</dbReference>
<dbReference type="InterPro" id="IPR036388">
    <property type="entry name" value="WH-like_DNA-bd_sf"/>
</dbReference>
<dbReference type="InterPro" id="IPR036390">
    <property type="entry name" value="WH_DNA-bd_sf"/>
</dbReference>
<dbReference type="NCBIfam" id="TIGR00281">
    <property type="entry name" value="SMC-Scp complex subunit ScpB"/>
    <property type="match status" value="1"/>
</dbReference>
<dbReference type="PANTHER" id="PTHR34298">
    <property type="entry name" value="SEGREGATION AND CONDENSATION PROTEIN B"/>
    <property type="match status" value="1"/>
</dbReference>
<dbReference type="PANTHER" id="PTHR34298:SF2">
    <property type="entry name" value="SEGREGATION AND CONDENSATION PROTEIN B"/>
    <property type="match status" value="1"/>
</dbReference>
<dbReference type="Pfam" id="PF04079">
    <property type="entry name" value="SMC_ScpB"/>
    <property type="match status" value="1"/>
</dbReference>
<dbReference type="PIRSF" id="PIRSF019345">
    <property type="entry name" value="ScpB"/>
    <property type="match status" value="1"/>
</dbReference>
<dbReference type="SUPFAM" id="SSF46785">
    <property type="entry name" value="Winged helix' DNA-binding domain"/>
    <property type="match status" value="2"/>
</dbReference>
<sequence>MTYLSQIEALLFVAGEEGLSLRHLASMLSLTPTALQQQLEKLSQKYEKDQHSSLCLIETANTYRLVTKEGFAELLRAYAKTPMNQSLSRASLEVLSIVAYKQPITRIEIDDIRGVNSSGALSKLLAFDLIREAGKKDVVGRPHLYATTDYFLDYMGINHLDELIEVSAVEPADEEIALFRTQD</sequence>
<organism>
    <name type="scientific">Streptococcus pyogenes serotype M5 (strain Manfredo)</name>
    <dbReference type="NCBI Taxonomy" id="160491"/>
    <lineage>
        <taxon>Bacteria</taxon>
        <taxon>Bacillati</taxon>
        <taxon>Bacillota</taxon>
        <taxon>Bacilli</taxon>
        <taxon>Lactobacillales</taxon>
        <taxon>Streptococcaceae</taxon>
        <taxon>Streptococcus</taxon>
    </lineage>
</organism>
<feature type="chain" id="PRO_1000069963" description="Segregation and condensation protein B">
    <location>
        <begin position="1"/>
        <end position="183"/>
    </location>
</feature>
<protein>
    <recommendedName>
        <fullName evidence="1">Segregation and condensation protein B</fullName>
    </recommendedName>
</protein>
<name>SCPB_STRPG</name>